<reference key="1">
    <citation type="submission" date="2006-03" db="EMBL/GenBank/DDBJ databases">
        <title>Complete sequence of chromosome of Psychrobacter cryohalolentis K5.</title>
        <authorList>
            <consortium name="US DOE Joint Genome Institute"/>
            <person name="Copeland A."/>
            <person name="Lucas S."/>
            <person name="Lapidus A."/>
            <person name="Barry K."/>
            <person name="Detter J.C."/>
            <person name="Glavina T."/>
            <person name="Hammon N."/>
            <person name="Israni S."/>
            <person name="Dalin E."/>
            <person name="Tice H."/>
            <person name="Pitluck S."/>
            <person name="Brettin T."/>
            <person name="Bruce D."/>
            <person name="Han C."/>
            <person name="Tapia R."/>
            <person name="Sims D.R."/>
            <person name="Gilna P."/>
            <person name="Schmutz J."/>
            <person name="Larimer F."/>
            <person name="Land M."/>
            <person name="Hauser L."/>
            <person name="Kyrpides N."/>
            <person name="Kim E."/>
            <person name="Richardson P."/>
        </authorList>
    </citation>
    <scope>NUCLEOTIDE SEQUENCE [LARGE SCALE GENOMIC DNA]</scope>
    <source>
        <strain>ATCC BAA-1226 / DSM 17306 / VKM B-2378 / K5</strain>
    </source>
</reference>
<name>PDXJ_PSYCK</name>
<comment type="function">
    <text evidence="1">Catalyzes the complicated ring closure reaction between the two acyclic compounds 1-deoxy-D-xylulose-5-phosphate (DXP) and 3-amino-2-oxopropyl phosphate (1-amino-acetone-3-phosphate or AAP) to form pyridoxine 5'-phosphate (PNP) and inorganic phosphate.</text>
</comment>
<comment type="catalytic activity">
    <reaction evidence="1">
        <text>3-amino-2-oxopropyl phosphate + 1-deoxy-D-xylulose 5-phosphate = pyridoxine 5'-phosphate + phosphate + 2 H2O + H(+)</text>
        <dbReference type="Rhea" id="RHEA:15265"/>
        <dbReference type="ChEBI" id="CHEBI:15377"/>
        <dbReference type="ChEBI" id="CHEBI:15378"/>
        <dbReference type="ChEBI" id="CHEBI:43474"/>
        <dbReference type="ChEBI" id="CHEBI:57279"/>
        <dbReference type="ChEBI" id="CHEBI:57792"/>
        <dbReference type="ChEBI" id="CHEBI:58589"/>
        <dbReference type="EC" id="2.6.99.2"/>
    </reaction>
</comment>
<comment type="pathway">
    <text evidence="1">Cofactor biosynthesis; pyridoxine 5'-phosphate biosynthesis; pyridoxine 5'-phosphate from D-erythrose 4-phosphate: step 5/5.</text>
</comment>
<comment type="subunit">
    <text evidence="1">Homooctamer; tetramer of dimers.</text>
</comment>
<comment type="subcellular location">
    <subcellularLocation>
        <location evidence="1">Cytoplasm</location>
    </subcellularLocation>
</comment>
<comment type="similarity">
    <text evidence="1">Belongs to the PNP synthase family.</text>
</comment>
<protein>
    <recommendedName>
        <fullName evidence="1">Pyridoxine 5'-phosphate synthase</fullName>
        <shortName evidence="1">PNP synthase</shortName>
        <ecNumber evidence="1">2.6.99.2</ecNumber>
    </recommendedName>
</protein>
<organism>
    <name type="scientific">Psychrobacter cryohalolentis (strain ATCC BAA-1226 / DSM 17306 / VKM B-2378 / K5)</name>
    <dbReference type="NCBI Taxonomy" id="335284"/>
    <lineage>
        <taxon>Bacteria</taxon>
        <taxon>Pseudomonadati</taxon>
        <taxon>Pseudomonadota</taxon>
        <taxon>Gammaproteobacteria</taxon>
        <taxon>Moraxellales</taxon>
        <taxon>Moraxellaceae</taxon>
        <taxon>Psychrobacter</taxon>
    </lineage>
</organism>
<accession>Q1QDV0</accession>
<sequence length="264" mass="28519">MTDTAQILPTTLEQNPQNTSKKPLLGVNVDHVATLRQARGVGYPSPLAAALLCEKAGADGITIHLREDRRHIQDADVYEMAGQLTTRMNLEMAATTEMLDIACQVKPYWVCLVPEKRAELTTEGGLDVAGQLASLTDYVSQLQAAGIKVSLFIDPEDKQIEAAVNCSADAIELHTGSYAEAGLAGKTDRVNVELERIKNAVITAKRLDSKLLVNAGHGLTRDNVHAIAQIDGIYELNIGHALIADALFVGIEQAVIMMKTAMHR</sequence>
<dbReference type="EC" id="2.6.99.2" evidence="1"/>
<dbReference type="EMBL" id="CP000323">
    <property type="protein sequence ID" value="ABE74153.1"/>
    <property type="molecule type" value="Genomic_DNA"/>
</dbReference>
<dbReference type="RefSeq" id="WP_011512739.1">
    <property type="nucleotide sequence ID" value="NC_007969.1"/>
</dbReference>
<dbReference type="SMR" id="Q1QDV0"/>
<dbReference type="STRING" id="335284.Pcryo_0370"/>
<dbReference type="KEGG" id="pcr:Pcryo_0370"/>
<dbReference type="eggNOG" id="COG0854">
    <property type="taxonomic scope" value="Bacteria"/>
</dbReference>
<dbReference type="HOGENOM" id="CLU_074563_0_0_6"/>
<dbReference type="UniPathway" id="UPA00244">
    <property type="reaction ID" value="UER00313"/>
</dbReference>
<dbReference type="Proteomes" id="UP000002425">
    <property type="component" value="Chromosome"/>
</dbReference>
<dbReference type="GO" id="GO:0005829">
    <property type="term" value="C:cytosol"/>
    <property type="evidence" value="ECO:0007669"/>
    <property type="project" value="TreeGrafter"/>
</dbReference>
<dbReference type="GO" id="GO:0033856">
    <property type="term" value="F:pyridoxine 5'-phosphate synthase activity"/>
    <property type="evidence" value="ECO:0007669"/>
    <property type="project" value="UniProtKB-EC"/>
</dbReference>
<dbReference type="GO" id="GO:0008615">
    <property type="term" value="P:pyridoxine biosynthetic process"/>
    <property type="evidence" value="ECO:0007669"/>
    <property type="project" value="UniProtKB-UniRule"/>
</dbReference>
<dbReference type="CDD" id="cd00003">
    <property type="entry name" value="PNPsynthase"/>
    <property type="match status" value="1"/>
</dbReference>
<dbReference type="Gene3D" id="3.20.20.70">
    <property type="entry name" value="Aldolase class I"/>
    <property type="match status" value="1"/>
</dbReference>
<dbReference type="HAMAP" id="MF_00279">
    <property type="entry name" value="PdxJ"/>
    <property type="match status" value="1"/>
</dbReference>
<dbReference type="InterPro" id="IPR013785">
    <property type="entry name" value="Aldolase_TIM"/>
</dbReference>
<dbReference type="InterPro" id="IPR004569">
    <property type="entry name" value="PyrdxlP_synth_PdxJ"/>
</dbReference>
<dbReference type="InterPro" id="IPR036130">
    <property type="entry name" value="Pyridoxine-5'_phos_synth"/>
</dbReference>
<dbReference type="NCBIfam" id="TIGR00559">
    <property type="entry name" value="pdxJ"/>
    <property type="match status" value="1"/>
</dbReference>
<dbReference type="NCBIfam" id="NF003625">
    <property type="entry name" value="PRK05265.1-3"/>
    <property type="match status" value="1"/>
</dbReference>
<dbReference type="NCBIfam" id="NF003627">
    <property type="entry name" value="PRK05265.1-5"/>
    <property type="match status" value="1"/>
</dbReference>
<dbReference type="PANTHER" id="PTHR30456">
    <property type="entry name" value="PYRIDOXINE 5'-PHOSPHATE SYNTHASE"/>
    <property type="match status" value="1"/>
</dbReference>
<dbReference type="PANTHER" id="PTHR30456:SF0">
    <property type="entry name" value="PYRIDOXINE 5'-PHOSPHATE SYNTHASE"/>
    <property type="match status" value="1"/>
</dbReference>
<dbReference type="Pfam" id="PF03740">
    <property type="entry name" value="PdxJ"/>
    <property type="match status" value="1"/>
</dbReference>
<dbReference type="SUPFAM" id="SSF63892">
    <property type="entry name" value="Pyridoxine 5'-phosphate synthase"/>
    <property type="match status" value="1"/>
</dbReference>
<feature type="chain" id="PRO_1000022396" description="Pyridoxine 5'-phosphate synthase">
    <location>
        <begin position="1"/>
        <end position="264"/>
    </location>
</feature>
<feature type="region of interest" description="Disordered" evidence="2">
    <location>
        <begin position="1"/>
        <end position="22"/>
    </location>
</feature>
<feature type="compositionally biased region" description="Polar residues" evidence="2">
    <location>
        <begin position="1"/>
        <end position="21"/>
    </location>
</feature>
<feature type="active site" description="Proton acceptor" evidence="1">
    <location>
        <position position="64"/>
    </location>
</feature>
<feature type="active site" description="Proton acceptor" evidence="1">
    <location>
        <position position="91"/>
    </location>
</feature>
<feature type="active site" description="Proton donor" evidence="1">
    <location>
        <position position="217"/>
    </location>
</feature>
<feature type="binding site" evidence="1">
    <location>
        <position position="28"/>
    </location>
    <ligand>
        <name>3-amino-2-oxopropyl phosphate</name>
        <dbReference type="ChEBI" id="CHEBI:57279"/>
    </ligand>
</feature>
<feature type="binding site" evidence="1">
    <location>
        <begin position="30"/>
        <end position="31"/>
    </location>
    <ligand>
        <name>1-deoxy-D-xylulose 5-phosphate</name>
        <dbReference type="ChEBI" id="CHEBI:57792"/>
    </ligand>
</feature>
<feature type="binding site" evidence="1">
    <location>
        <position position="39"/>
    </location>
    <ligand>
        <name>3-amino-2-oxopropyl phosphate</name>
        <dbReference type="ChEBI" id="CHEBI:57279"/>
    </ligand>
</feature>
<feature type="binding site" evidence="1">
    <location>
        <position position="66"/>
    </location>
    <ligand>
        <name>1-deoxy-D-xylulose 5-phosphate</name>
        <dbReference type="ChEBI" id="CHEBI:57792"/>
    </ligand>
</feature>
<feature type="binding site" evidence="1">
    <location>
        <position position="71"/>
    </location>
    <ligand>
        <name>1-deoxy-D-xylulose 5-phosphate</name>
        <dbReference type="ChEBI" id="CHEBI:57792"/>
    </ligand>
</feature>
<feature type="binding site" evidence="1">
    <location>
        <position position="121"/>
    </location>
    <ligand>
        <name>1-deoxy-D-xylulose 5-phosphate</name>
        <dbReference type="ChEBI" id="CHEBI:57792"/>
    </ligand>
</feature>
<feature type="binding site" evidence="1">
    <location>
        <position position="218"/>
    </location>
    <ligand>
        <name>3-amino-2-oxopropyl phosphate</name>
        <dbReference type="ChEBI" id="CHEBI:57279"/>
    </ligand>
</feature>
<feature type="binding site" evidence="1">
    <location>
        <begin position="239"/>
        <end position="240"/>
    </location>
    <ligand>
        <name>3-amino-2-oxopropyl phosphate</name>
        <dbReference type="ChEBI" id="CHEBI:57279"/>
    </ligand>
</feature>
<feature type="site" description="Transition state stabilizer" evidence="1">
    <location>
        <position position="172"/>
    </location>
</feature>
<proteinExistence type="inferred from homology"/>
<gene>
    <name evidence="1" type="primary">pdxJ</name>
    <name type="ordered locus">Pcryo_0370</name>
</gene>
<keyword id="KW-0963">Cytoplasm</keyword>
<keyword id="KW-0664">Pyridoxine biosynthesis</keyword>
<keyword id="KW-0808">Transferase</keyword>
<evidence type="ECO:0000255" key="1">
    <source>
        <dbReference type="HAMAP-Rule" id="MF_00279"/>
    </source>
</evidence>
<evidence type="ECO:0000256" key="2">
    <source>
        <dbReference type="SAM" id="MobiDB-lite"/>
    </source>
</evidence>